<protein>
    <recommendedName>
        <fullName>Prolactin receptor</fullName>
        <shortName>PRL-R</shortName>
        <shortName>oPR</shortName>
    </recommendedName>
</protein>
<comment type="function">
    <text>This is a receptor for the anterior pituitary hormone prolactin.</text>
</comment>
<comment type="subunit">
    <text evidence="1">Interacts with SMARCA1. Interacts with NEK3 and VAV2 and this interaction is prolactin-dependent.</text>
</comment>
<comment type="subcellular location">
    <subcellularLocation>
        <location>Membrane</location>
        <topology>Single-pass type I membrane protein</topology>
    </subcellularLocation>
</comment>
<comment type="alternative products">
    <event type="alternative splicing"/>
    <isoform>
        <id>O46561-1</id>
        <name>1</name>
        <name>Long</name>
        <name>L-OPR</name>
        <sequence type="displayed"/>
    </isoform>
    <isoform>
        <id>O46561-2</id>
        <name>2</name>
        <name>Short</name>
        <name>S-OPR</name>
        <sequence type="described" ref="VSP_001732 VSP_001733"/>
    </isoform>
    <isoform>
        <id>O46561-3</id>
        <name>3</name>
        <name>Soluble</name>
        <sequence type="described" ref="VSP_001730 VSP_001731"/>
    </isoform>
</comment>
<comment type="tissue specificity">
    <text evidence="5 6">Expressed in all tissues examined; liver, pituitary, adrenal gland, ovary and fetal liver.</text>
</comment>
<comment type="domain">
    <text>The WSXWS motif appears to be necessary for proper protein folding and thereby efficient intracellular transport and cell-surface receptor binding.</text>
</comment>
<comment type="domain">
    <text>The box 1 motif is required for JAK interaction and/or activation.</text>
</comment>
<comment type="similarity">
    <text evidence="7">Belongs to the type I cytokine receptor family. Type 1 subfamily.</text>
</comment>
<name>PRLR_SHEEP</name>
<accession>O46561</accession>
<accession>O46569</accession>
<accession>O46573</accession>
<accession>O46574</accession>
<accession>P79203</accession>
<accession>P79205</accession>
<proteinExistence type="evidence at transcript level"/>
<reference key="1">
    <citation type="journal article" date="1997" name="J. Mol. Endocrinol.">
        <title>Long and short forms of the ovine prolactin receptor: cDNA cloning and genomic analysis reveal that the two forms arise by different alternative splicing mechanisms in ruminants and in rodents.</title>
        <authorList>
            <person name="Bignon C."/>
            <person name="Binart N."/>
            <person name="Ormandy C."/>
            <person name="Schuler L.A."/>
            <person name="Kelly P.A."/>
            <person name="Djiane J."/>
        </authorList>
    </citation>
    <scope>NUCLEOTIDE SEQUENCE [GENOMIC DNA / MRNA]</scope>
    <scope>ALTERNATIVE SPLICING</scope>
    <source>
        <tissue>Liver</tissue>
        <tissue>Mammary gland</tissue>
    </source>
</reference>
<reference key="2">
    <citation type="journal article" date="1998" name="Endocrinology">
        <title>Detection of prolactin receptor gene expression in the sheep pituitary gland and visualization of the specific translation of the signal in gonadotrophs.</title>
        <authorList>
            <person name="Tortonese D.J."/>
            <person name="Brooks J."/>
            <person name="Ingleton P.M."/>
            <person name="McNeilly A.S."/>
        </authorList>
    </citation>
    <scope>NUCLEOTIDE SEQUENCE [MRNA] OF 61-395</scope>
    <scope>ALTERNATIVE SPLICING</scope>
    <scope>TISSUE SPECIFICITY</scope>
    <source>
        <strain>Scottish blackface</strain>
        <tissue>Pituitary anterior lobe</tissue>
    </source>
</reference>
<reference key="3">
    <citation type="journal article" date="1995" name="Endocrine">
        <title>Two forms of the prolactin receptor messenger ribonucleic acid are present in ovine fetal liver and adult ovary.</title>
        <authorList>
            <person name="Anthony R.V."/>
            <person name="Smith G.W."/>
            <person name="Duong A."/>
            <person name="Pratt S.L."/>
            <person name="Smith M.F."/>
        </authorList>
    </citation>
    <scope>NUCLEOTIDE SEQUENCE OF 147-302</scope>
    <scope>ALTERNATIVE SPLICING</scope>
    <scope>TISSUE SPECIFICITY</scope>
    <source>
        <tissue>Corpus luteum</tissue>
        <tissue>Fetal liver</tissue>
    </source>
</reference>
<sequence>MKENAASRVLFILLLFLFASLLNGQSPPEKPKLIKCRSPGKETFTCWWEPGADGGLPTNYTLTYRKEGETLIHECPDYKTGGPNSCYFSKKYTSIWKMYVITVSAINQMGISSSDPLYVDVTYIVEPEPPVNLTLELKHPEDRKPYLWIKWSPPTLTDVKSGWFSIQYEIRLKPEKATDWETHFAPKLTQLKIFNLYPGQKYLVQIRCKPDHGYWSEWSPESFIQIPNDFPVKDTSMWIFVGVLSAVICLIMVWAVALKGYSMVTCILPPVPGPKIKGFDIHLLEKGKSEELLRALESQDFLPTSDCEDLLMEFIEVDDSEDQHLMPHPSKEHMEQGVKPMHLDPDTDSGRGSCDSPSLLSEKCDEPQAYPSKFHIPEGPEKLEDPETNHTCLQAPQSTSGEGKIPYFLANGPKSSTWPFPQPPSLYSPRYSYHNIADVCELALGMAGTTATLLDQTDQHAFKPSKTIETGGEGKAAKQSESEGYSSEPDQDMAWPLLQDKTPLFSAKPLEYVEIHKVSQDGVLALFPKQNEKVDAPETSKEYSKVSRVTDSNILVLIPDLQAQNLTLLEESAKKAPPALP</sequence>
<evidence type="ECO:0000250" key="1"/>
<evidence type="ECO:0000255" key="2"/>
<evidence type="ECO:0000255" key="3">
    <source>
        <dbReference type="PROSITE-ProRule" id="PRU00316"/>
    </source>
</evidence>
<evidence type="ECO:0000256" key="4">
    <source>
        <dbReference type="SAM" id="MobiDB-lite"/>
    </source>
</evidence>
<evidence type="ECO:0000269" key="5">
    <source>
    </source>
</evidence>
<evidence type="ECO:0000269" key="6">
    <source ref="3"/>
</evidence>
<evidence type="ECO:0000305" key="7"/>
<feature type="signal peptide" evidence="2">
    <location>
        <begin position="1"/>
        <end position="24"/>
    </location>
</feature>
<feature type="chain" id="PRO_0000010982" description="Prolactin receptor">
    <location>
        <begin position="25"/>
        <end position="581"/>
    </location>
</feature>
<feature type="topological domain" description="Extracellular" evidence="2">
    <location>
        <begin position="25"/>
        <end position="237"/>
    </location>
</feature>
<feature type="transmembrane region" description="Helical" evidence="2">
    <location>
        <begin position="238"/>
        <end position="258"/>
    </location>
</feature>
<feature type="topological domain" description="Cytoplasmic" evidence="2">
    <location>
        <begin position="259"/>
        <end position="581"/>
    </location>
</feature>
<feature type="domain" description="Fibronectin type-III 1" evidence="3">
    <location>
        <begin position="27"/>
        <end position="127"/>
    </location>
</feature>
<feature type="domain" description="Fibronectin type-III 2" evidence="3">
    <location>
        <begin position="129"/>
        <end position="229"/>
    </location>
</feature>
<feature type="region of interest" description="Disordered" evidence="4">
    <location>
        <begin position="323"/>
        <end position="388"/>
    </location>
</feature>
<feature type="region of interest" description="Disordered" evidence="4">
    <location>
        <begin position="462"/>
        <end position="492"/>
    </location>
</feature>
<feature type="short sequence motif" description="WSXWS motif">
    <location>
        <begin position="215"/>
        <end position="219"/>
    </location>
</feature>
<feature type="short sequence motif" description="Box 1 motif">
    <location>
        <begin position="267"/>
        <end position="275"/>
    </location>
</feature>
<feature type="compositionally biased region" description="Basic and acidic residues" evidence="4">
    <location>
        <begin position="323"/>
        <end position="349"/>
    </location>
</feature>
<feature type="compositionally biased region" description="Basic and acidic residues" evidence="4">
    <location>
        <begin position="375"/>
        <end position="388"/>
    </location>
</feature>
<feature type="binding site" evidence="1">
    <location>
        <position position="211"/>
    </location>
    <ligand>
        <name>Zn(2+)</name>
        <dbReference type="ChEBI" id="CHEBI:29105"/>
    </ligand>
</feature>
<feature type="binding site" evidence="1">
    <location>
        <position position="212"/>
    </location>
    <ligand>
        <name>Zn(2+)</name>
        <dbReference type="ChEBI" id="CHEBI:29105"/>
    </ligand>
</feature>
<feature type="glycosylation site" description="N-linked (GlcNAc...) asparagine" evidence="2">
    <location>
        <position position="59"/>
    </location>
</feature>
<feature type="glycosylation site" description="N-linked (GlcNAc...) asparagine" evidence="2">
    <location>
        <position position="132"/>
    </location>
</feature>
<feature type="disulfide bond" evidence="1">
    <location>
        <begin position="36"/>
        <end position="46"/>
    </location>
</feature>
<feature type="disulfide bond" evidence="1">
    <location>
        <begin position="75"/>
        <end position="86"/>
    </location>
</feature>
<feature type="splice variant" id="VSP_001730" description="In isoform 3." evidence="7">
    <original>GQSPPEKPKLIKCRSPGKETFTCWWEPGADGGLPTNYTLTYRK</original>
    <variation>ASLYVPGGKCSSVCTYMAYPFVGGIFLHMYLCVDQYLLLTVTS</variation>
    <location>
        <begin position="24"/>
        <end position="66"/>
    </location>
</feature>
<feature type="splice variant" id="VSP_001731" description="In isoform 3." evidence="7">
    <location>
        <begin position="67"/>
        <end position="581"/>
    </location>
</feature>
<feature type="splice variant" id="VSP_001732" description="In isoform 2." evidence="7">
    <original>KGKSEELLRAL</original>
    <variation>ISQPSRLVSVF</variation>
    <location>
        <begin position="286"/>
        <end position="296"/>
    </location>
</feature>
<feature type="splice variant" id="VSP_001733" description="In isoform 2." evidence="7">
    <location>
        <begin position="297"/>
        <end position="581"/>
    </location>
</feature>
<feature type="sequence conflict" description="In Ref. 1; AAB97743/AAB97744." evidence="7" ref="1">
    <original>I</original>
    <variation>V</variation>
    <location>
        <position position="281"/>
    </location>
</feature>
<feature type="sequence conflict" description="In Ref. 2; CAA71597." evidence="7" ref="2">
    <original>E</original>
    <variation>K</variation>
    <location>
        <position position="387"/>
    </location>
</feature>
<dbReference type="EMBL" id="AF041257">
    <property type="protein sequence ID" value="AAB96795.1"/>
    <property type="molecule type" value="mRNA"/>
</dbReference>
<dbReference type="EMBL" id="AF041977">
    <property type="protein sequence ID" value="AAB96920.1"/>
    <property type="molecule type" value="mRNA"/>
</dbReference>
<dbReference type="EMBL" id="AF041979">
    <property type="protein sequence ID" value="AAB97082.1"/>
    <property type="molecule type" value="mRNA"/>
</dbReference>
<dbReference type="EMBL" id="AF042358">
    <property type="protein sequence ID" value="AAB97744.1"/>
    <property type="molecule type" value="Genomic_DNA"/>
</dbReference>
<dbReference type="EMBL" id="AF042358">
    <property type="protein sequence ID" value="AAB97743.1"/>
    <property type="molecule type" value="Genomic_DNA"/>
</dbReference>
<dbReference type="EMBL" id="AF041978">
    <property type="protein sequence ID" value="AAB96965.1"/>
    <property type="molecule type" value="mRNA"/>
</dbReference>
<dbReference type="EMBL" id="Y10578">
    <property type="protein sequence ID" value="CAA71597.1"/>
    <property type="molecule type" value="mRNA"/>
</dbReference>
<dbReference type="EMBL" id="Y10808">
    <property type="protein sequence ID" value="CAA71766.1"/>
    <property type="molecule type" value="mRNA"/>
</dbReference>
<dbReference type="RefSeq" id="NP_001009204.1">
    <molecule id="O46561-3"/>
    <property type="nucleotide sequence ID" value="NM_001009204.1"/>
</dbReference>
<dbReference type="SMR" id="O46561"/>
<dbReference type="STRING" id="9940.ENSOARP00000012276"/>
<dbReference type="GlyCosmos" id="O46561">
    <property type="glycosylation" value="2 sites, No reported glycans"/>
</dbReference>
<dbReference type="PaxDb" id="9940-ENSOARP00000012276"/>
<dbReference type="KEGG" id="oas:443020"/>
<dbReference type="CTD" id="19066"/>
<dbReference type="eggNOG" id="ENOG502R22A">
    <property type="taxonomic scope" value="Eukaryota"/>
</dbReference>
<dbReference type="Proteomes" id="UP000002356">
    <property type="component" value="Unplaced"/>
</dbReference>
<dbReference type="GO" id="GO:0009897">
    <property type="term" value="C:external side of plasma membrane"/>
    <property type="evidence" value="ECO:0007669"/>
    <property type="project" value="TreeGrafter"/>
</dbReference>
<dbReference type="GO" id="GO:0043235">
    <property type="term" value="C:receptor complex"/>
    <property type="evidence" value="ECO:0007669"/>
    <property type="project" value="TreeGrafter"/>
</dbReference>
<dbReference type="GO" id="GO:0019955">
    <property type="term" value="F:cytokine binding"/>
    <property type="evidence" value="ECO:0007669"/>
    <property type="project" value="TreeGrafter"/>
</dbReference>
<dbReference type="GO" id="GO:0046872">
    <property type="term" value="F:metal ion binding"/>
    <property type="evidence" value="ECO:0007669"/>
    <property type="project" value="UniProtKB-KW"/>
</dbReference>
<dbReference type="GO" id="GO:0017046">
    <property type="term" value="F:peptide hormone binding"/>
    <property type="evidence" value="ECO:0007669"/>
    <property type="project" value="TreeGrafter"/>
</dbReference>
<dbReference type="GO" id="GO:0004925">
    <property type="term" value="F:prolactin receptor activity"/>
    <property type="evidence" value="ECO:0007669"/>
    <property type="project" value="TreeGrafter"/>
</dbReference>
<dbReference type="GO" id="GO:0008284">
    <property type="term" value="P:positive regulation of cell population proliferation"/>
    <property type="evidence" value="ECO:0007669"/>
    <property type="project" value="TreeGrafter"/>
</dbReference>
<dbReference type="CDD" id="cd00063">
    <property type="entry name" value="FN3"/>
    <property type="match status" value="2"/>
</dbReference>
<dbReference type="FunFam" id="2.60.40.10:FF:000287">
    <property type="entry name" value="Prolactin receptor"/>
    <property type="match status" value="1"/>
</dbReference>
<dbReference type="FunFam" id="2.60.40.10:FF:000358">
    <property type="entry name" value="Prolactin receptor"/>
    <property type="match status" value="1"/>
</dbReference>
<dbReference type="Gene3D" id="2.60.40.10">
    <property type="entry name" value="Immunoglobulins"/>
    <property type="match status" value="2"/>
</dbReference>
<dbReference type="InterPro" id="IPR003961">
    <property type="entry name" value="FN3_dom"/>
</dbReference>
<dbReference type="InterPro" id="IPR036116">
    <property type="entry name" value="FN3_sf"/>
</dbReference>
<dbReference type="InterPro" id="IPR015152">
    <property type="entry name" value="Growth/epo_recpt_lig-bind"/>
</dbReference>
<dbReference type="InterPro" id="IPR013783">
    <property type="entry name" value="Ig-like_fold"/>
</dbReference>
<dbReference type="InterPro" id="IPR003528">
    <property type="entry name" value="Long_hematopoietin_rcpt_CS"/>
</dbReference>
<dbReference type="InterPro" id="IPR050379">
    <property type="entry name" value="Type-I_Cytokine_Rcpt"/>
</dbReference>
<dbReference type="PANTHER" id="PTHR23036">
    <property type="entry name" value="CYTOKINE RECEPTOR"/>
    <property type="match status" value="1"/>
</dbReference>
<dbReference type="PANTHER" id="PTHR23036:SF86">
    <property type="entry name" value="PROLACTIN RECEPTOR"/>
    <property type="match status" value="1"/>
</dbReference>
<dbReference type="Pfam" id="PF09067">
    <property type="entry name" value="EpoR_lig-bind"/>
    <property type="match status" value="1"/>
</dbReference>
<dbReference type="SMART" id="SM00060">
    <property type="entry name" value="FN3"/>
    <property type="match status" value="2"/>
</dbReference>
<dbReference type="SUPFAM" id="SSF49265">
    <property type="entry name" value="Fibronectin type III"/>
    <property type="match status" value="2"/>
</dbReference>
<dbReference type="PROSITE" id="PS50853">
    <property type="entry name" value="FN3"/>
    <property type="match status" value="2"/>
</dbReference>
<dbReference type="PROSITE" id="PS01352">
    <property type="entry name" value="HEMATOPO_REC_L_F1"/>
    <property type="match status" value="1"/>
</dbReference>
<keyword id="KW-0025">Alternative splicing</keyword>
<keyword id="KW-1015">Disulfide bond</keyword>
<keyword id="KW-0325">Glycoprotein</keyword>
<keyword id="KW-0472">Membrane</keyword>
<keyword id="KW-0479">Metal-binding</keyword>
<keyword id="KW-0675">Receptor</keyword>
<keyword id="KW-1185">Reference proteome</keyword>
<keyword id="KW-0677">Repeat</keyword>
<keyword id="KW-0732">Signal</keyword>
<keyword id="KW-0812">Transmembrane</keyword>
<keyword id="KW-1133">Transmembrane helix</keyword>
<keyword id="KW-0862">Zinc</keyword>
<gene>
    <name type="primary">PRLR</name>
</gene>
<organism>
    <name type="scientific">Ovis aries</name>
    <name type="common">Sheep</name>
    <dbReference type="NCBI Taxonomy" id="9940"/>
    <lineage>
        <taxon>Eukaryota</taxon>
        <taxon>Metazoa</taxon>
        <taxon>Chordata</taxon>
        <taxon>Craniata</taxon>
        <taxon>Vertebrata</taxon>
        <taxon>Euteleostomi</taxon>
        <taxon>Mammalia</taxon>
        <taxon>Eutheria</taxon>
        <taxon>Laurasiatheria</taxon>
        <taxon>Artiodactyla</taxon>
        <taxon>Ruminantia</taxon>
        <taxon>Pecora</taxon>
        <taxon>Bovidae</taxon>
        <taxon>Caprinae</taxon>
        <taxon>Ovis</taxon>
    </lineage>
</organism>